<sequence>MAGHSKWANTKHRKAKQDASRAKVFTKYIREIVTAAKLGGADAASNPRLRAVVEKALSVNMTRDAINRAIQRGAGGEDNDDLNEVTYEGYGVGGVAVLVETMTDNLNRTVPDVRHCFSKTNGNLGTNGSVSYLFTKRGEISFEDVSLEDKIMDVALEAGADDIEIEEDGILVITSPESFGDVQDALTAAGLKSDNAEVVMSPSTKAEITDIEQAKQIMKMIDMLEDLDDVQNVYTNVEFSEEVLAQLDA</sequence>
<gene>
    <name type="ordered locus">ACIAD2052</name>
</gene>
<comment type="subcellular location">
    <subcellularLocation>
        <location evidence="1">Cytoplasm</location>
    </subcellularLocation>
</comment>
<comment type="similarity">
    <text evidence="1">Belongs to the TACO1 family.</text>
</comment>
<reference key="1">
    <citation type="journal article" date="2004" name="Nucleic Acids Res.">
        <title>Unique features revealed by the genome sequence of Acinetobacter sp. ADP1, a versatile and naturally transformation competent bacterium.</title>
        <authorList>
            <person name="Barbe V."/>
            <person name="Vallenet D."/>
            <person name="Fonknechten N."/>
            <person name="Kreimeyer A."/>
            <person name="Oztas S."/>
            <person name="Labarre L."/>
            <person name="Cruveiller S."/>
            <person name="Robert C."/>
            <person name="Duprat S."/>
            <person name="Wincker P."/>
            <person name="Ornston L.N."/>
            <person name="Weissenbach J."/>
            <person name="Marliere P."/>
            <person name="Cohen G.N."/>
            <person name="Medigue C."/>
        </authorList>
    </citation>
    <scope>NUCLEOTIDE SEQUENCE [LARGE SCALE GENOMIC DNA]</scope>
    <source>
        <strain>ATCC 33305 / BD413 / ADP1</strain>
    </source>
</reference>
<organism>
    <name type="scientific">Acinetobacter baylyi (strain ATCC 33305 / BD413 / ADP1)</name>
    <dbReference type="NCBI Taxonomy" id="62977"/>
    <lineage>
        <taxon>Bacteria</taxon>
        <taxon>Pseudomonadati</taxon>
        <taxon>Pseudomonadota</taxon>
        <taxon>Gammaproteobacteria</taxon>
        <taxon>Moraxellales</taxon>
        <taxon>Moraxellaceae</taxon>
        <taxon>Acinetobacter</taxon>
    </lineage>
</organism>
<evidence type="ECO:0000255" key="1">
    <source>
        <dbReference type="HAMAP-Rule" id="MF_00693"/>
    </source>
</evidence>
<keyword id="KW-0963">Cytoplasm</keyword>
<keyword id="KW-0238">DNA-binding</keyword>
<keyword id="KW-0804">Transcription</keyword>
<keyword id="KW-0805">Transcription regulation</keyword>
<name>Y2052_ACIAD</name>
<feature type="chain" id="PRO_0000175746" description="Probable transcriptional regulatory protein ACIAD2052">
    <location>
        <begin position="1"/>
        <end position="249"/>
    </location>
</feature>
<dbReference type="EMBL" id="CR543861">
    <property type="protein sequence ID" value="CAG68868.1"/>
    <property type="molecule type" value="Genomic_DNA"/>
</dbReference>
<dbReference type="RefSeq" id="WP_004927476.1">
    <property type="nucleotide sequence ID" value="NC_005966.1"/>
</dbReference>
<dbReference type="SMR" id="Q6FAP5"/>
<dbReference type="STRING" id="202950.GCA_001485005_00322"/>
<dbReference type="GeneID" id="45234405"/>
<dbReference type="KEGG" id="aci:ACIAD2052"/>
<dbReference type="eggNOG" id="COG0217">
    <property type="taxonomic scope" value="Bacteria"/>
</dbReference>
<dbReference type="HOGENOM" id="CLU_062974_2_2_6"/>
<dbReference type="OrthoDB" id="9781053at2"/>
<dbReference type="BioCyc" id="ASP62977:ACIAD_RS09435-MONOMER"/>
<dbReference type="Proteomes" id="UP000000430">
    <property type="component" value="Chromosome"/>
</dbReference>
<dbReference type="GO" id="GO:0005829">
    <property type="term" value="C:cytosol"/>
    <property type="evidence" value="ECO:0007669"/>
    <property type="project" value="TreeGrafter"/>
</dbReference>
<dbReference type="GO" id="GO:0003677">
    <property type="term" value="F:DNA binding"/>
    <property type="evidence" value="ECO:0007669"/>
    <property type="project" value="UniProtKB-UniRule"/>
</dbReference>
<dbReference type="GO" id="GO:0006355">
    <property type="term" value="P:regulation of DNA-templated transcription"/>
    <property type="evidence" value="ECO:0007669"/>
    <property type="project" value="UniProtKB-UniRule"/>
</dbReference>
<dbReference type="FunFam" id="1.10.10.200:FF:000001">
    <property type="entry name" value="Probable transcriptional regulatory protein YebC"/>
    <property type="match status" value="1"/>
</dbReference>
<dbReference type="FunFam" id="3.30.70.980:FF:000002">
    <property type="entry name" value="Probable transcriptional regulatory protein YebC"/>
    <property type="match status" value="1"/>
</dbReference>
<dbReference type="Gene3D" id="1.10.10.200">
    <property type="match status" value="1"/>
</dbReference>
<dbReference type="Gene3D" id="3.30.70.980">
    <property type="match status" value="2"/>
</dbReference>
<dbReference type="HAMAP" id="MF_00693">
    <property type="entry name" value="Transcrip_reg_TACO1"/>
    <property type="match status" value="1"/>
</dbReference>
<dbReference type="InterPro" id="IPR017856">
    <property type="entry name" value="Integrase-like_N"/>
</dbReference>
<dbReference type="InterPro" id="IPR048300">
    <property type="entry name" value="TACO1_YebC-like_2nd/3rd_dom"/>
</dbReference>
<dbReference type="InterPro" id="IPR049083">
    <property type="entry name" value="TACO1_YebC_N"/>
</dbReference>
<dbReference type="InterPro" id="IPR002876">
    <property type="entry name" value="Transcrip_reg_TACO1-like"/>
</dbReference>
<dbReference type="InterPro" id="IPR026564">
    <property type="entry name" value="Transcrip_reg_TACO1-like_dom3"/>
</dbReference>
<dbReference type="InterPro" id="IPR029072">
    <property type="entry name" value="YebC-like"/>
</dbReference>
<dbReference type="NCBIfam" id="NF001030">
    <property type="entry name" value="PRK00110.1"/>
    <property type="match status" value="1"/>
</dbReference>
<dbReference type="NCBIfam" id="NF009044">
    <property type="entry name" value="PRK12378.1"/>
    <property type="match status" value="1"/>
</dbReference>
<dbReference type="NCBIfam" id="TIGR01033">
    <property type="entry name" value="YebC/PmpR family DNA-binding transcriptional regulator"/>
    <property type="match status" value="1"/>
</dbReference>
<dbReference type="PANTHER" id="PTHR12532:SF6">
    <property type="entry name" value="TRANSCRIPTIONAL REGULATORY PROTEIN YEBC-RELATED"/>
    <property type="match status" value="1"/>
</dbReference>
<dbReference type="PANTHER" id="PTHR12532">
    <property type="entry name" value="TRANSLATIONAL ACTIVATOR OF CYTOCHROME C OXIDASE 1"/>
    <property type="match status" value="1"/>
</dbReference>
<dbReference type="Pfam" id="PF20772">
    <property type="entry name" value="TACO1_YebC_N"/>
    <property type="match status" value="1"/>
</dbReference>
<dbReference type="Pfam" id="PF01709">
    <property type="entry name" value="Transcrip_reg"/>
    <property type="match status" value="1"/>
</dbReference>
<dbReference type="SUPFAM" id="SSF75625">
    <property type="entry name" value="YebC-like"/>
    <property type="match status" value="1"/>
</dbReference>
<protein>
    <recommendedName>
        <fullName evidence="1">Probable transcriptional regulatory protein ACIAD2052</fullName>
    </recommendedName>
</protein>
<proteinExistence type="inferred from homology"/>
<accession>Q6FAP5</accession>